<feature type="chain" id="PRO_0000115336" description="Uncharacterized protein UL66">
    <location>
        <begin position="1"/>
        <end position="114"/>
    </location>
</feature>
<proteinExistence type="predicted"/>
<protein>
    <recommendedName>
        <fullName>Uncharacterized protein UL66</fullName>
    </recommendedName>
</protein>
<gene>
    <name type="primary">UL66</name>
</gene>
<name>UL66_HCMVA</name>
<dbReference type="EMBL" id="X17403">
    <property type="protein sequence ID" value="CAA35381.1"/>
    <property type="molecule type" value="Genomic_DNA"/>
</dbReference>
<dbReference type="PIR" id="S09829">
    <property type="entry name" value="S09829"/>
</dbReference>
<dbReference type="SMR" id="P16822"/>
<dbReference type="Proteomes" id="UP000008991">
    <property type="component" value="Segment"/>
</dbReference>
<organism>
    <name type="scientific">Human cytomegalovirus (strain AD169)</name>
    <name type="common">HHV-5</name>
    <name type="synonym">Human herpesvirus 5</name>
    <dbReference type="NCBI Taxonomy" id="10360"/>
    <lineage>
        <taxon>Viruses</taxon>
        <taxon>Duplodnaviria</taxon>
        <taxon>Heunggongvirae</taxon>
        <taxon>Peploviricota</taxon>
        <taxon>Herviviricetes</taxon>
        <taxon>Herpesvirales</taxon>
        <taxon>Orthoherpesviridae</taxon>
        <taxon>Betaherpesvirinae</taxon>
        <taxon>Cytomegalovirus</taxon>
        <taxon>Cytomegalovirus humanbeta5</taxon>
        <taxon>Human cytomegalovirus</taxon>
    </lineage>
</organism>
<reference key="1">
    <citation type="journal article" date="1990" name="Curr. Top. Microbiol. Immunol.">
        <title>Analysis of the protein-coding content of the sequence of human cytomegalovirus strain AD169.</title>
        <authorList>
            <person name="Chee M.S."/>
            <person name="Bankier A.T."/>
            <person name="Beck S."/>
            <person name="Bohni R."/>
            <person name="Brown C.M."/>
            <person name="Cerny R."/>
            <person name="Horsnell T."/>
            <person name="Hutchison C.A. III"/>
            <person name="Kouzarides T."/>
            <person name="Martignetti J.A."/>
            <person name="Preddie E."/>
            <person name="Satchwell S.C."/>
            <person name="Tomlinson P."/>
            <person name="Weston K.M."/>
            <person name="Barrell B.G."/>
        </authorList>
    </citation>
    <scope>NUCLEOTIDE SEQUENCE [LARGE SCALE GENOMIC DNA]</scope>
</reference>
<sequence>SCYYVCVFCFGRYTVPFSGPSVPWRDEKRACFTRWLMPSVVDISHFLKKQHKKKMMWFVVLTVSFSYYRYYRSRERTARENTVFSGTSCRRPSPGRRDVRRERWRTTNTDRWCS</sequence>
<organismHost>
    <name type="scientific">Homo sapiens</name>
    <name type="common">Human</name>
    <dbReference type="NCBI Taxonomy" id="9606"/>
</organismHost>
<accession>P16822</accession>